<gene>
    <name evidence="1" type="primary">rpsZ</name>
    <name evidence="1" type="synonym">rpsN</name>
    <name type="ordered locus">DP1137</name>
</gene>
<proteinExistence type="inferred from homology"/>
<name>RS14Z_DESPS</name>
<feature type="chain" id="PRO_0000269097" description="Small ribosomal subunit protein uS14">
    <location>
        <begin position="1"/>
        <end position="61"/>
    </location>
</feature>
<feature type="binding site" evidence="1">
    <location>
        <position position="24"/>
    </location>
    <ligand>
        <name>Zn(2+)</name>
        <dbReference type="ChEBI" id="CHEBI:29105"/>
    </ligand>
</feature>
<feature type="binding site" evidence="1">
    <location>
        <position position="27"/>
    </location>
    <ligand>
        <name>Zn(2+)</name>
        <dbReference type="ChEBI" id="CHEBI:29105"/>
    </ligand>
</feature>
<feature type="binding site" evidence="1">
    <location>
        <position position="40"/>
    </location>
    <ligand>
        <name>Zn(2+)</name>
        <dbReference type="ChEBI" id="CHEBI:29105"/>
    </ligand>
</feature>
<feature type="binding site" evidence="1">
    <location>
        <position position="43"/>
    </location>
    <ligand>
        <name>Zn(2+)</name>
        <dbReference type="ChEBI" id="CHEBI:29105"/>
    </ligand>
</feature>
<organism>
    <name type="scientific">Desulfotalea psychrophila (strain LSv54 / DSM 12343)</name>
    <dbReference type="NCBI Taxonomy" id="177439"/>
    <lineage>
        <taxon>Bacteria</taxon>
        <taxon>Pseudomonadati</taxon>
        <taxon>Thermodesulfobacteriota</taxon>
        <taxon>Desulfobulbia</taxon>
        <taxon>Desulfobulbales</taxon>
        <taxon>Desulfocapsaceae</taxon>
        <taxon>Desulfotalea</taxon>
    </lineage>
</organism>
<keyword id="KW-0479">Metal-binding</keyword>
<keyword id="KW-1185">Reference proteome</keyword>
<keyword id="KW-0687">Ribonucleoprotein</keyword>
<keyword id="KW-0689">Ribosomal protein</keyword>
<keyword id="KW-0694">RNA-binding</keyword>
<keyword id="KW-0699">rRNA-binding</keyword>
<keyword id="KW-0862">Zinc</keyword>
<comment type="function">
    <text evidence="1">Binds 16S rRNA, required for the assembly of 30S particles and may also be responsible for determining the conformation of the 16S rRNA at the A site.</text>
</comment>
<comment type="cofactor">
    <cofactor evidence="1">
        <name>Zn(2+)</name>
        <dbReference type="ChEBI" id="CHEBI:29105"/>
    </cofactor>
    <text evidence="1">Binds 1 zinc ion per subunit.</text>
</comment>
<comment type="subunit">
    <text evidence="1">Part of the 30S ribosomal subunit. Contacts proteins S3 and S10.</text>
</comment>
<comment type="similarity">
    <text evidence="1">Belongs to the universal ribosomal protein uS14 family. Zinc-binding uS14 subfamily.</text>
</comment>
<protein>
    <recommendedName>
        <fullName evidence="1">Small ribosomal subunit protein uS14</fullName>
    </recommendedName>
    <alternativeName>
        <fullName evidence="2">30S ribosomal protein S14 type Z</fullName>
    </alternativeName>
</protein>
<evidence type="ECO:0000255" key="1">
    <source>
        <dbReference type="HAMAP-Rule" id="MF_01364"/>
    </source>
</evidence>
<evidence type="ECO:0000305" key="2"/>
<sequence length="61" mass="6979">MAKKSIIAKAKRKQKFAVREYNRCPLCGRPRAFIRKFGICRICFRKLASSGEVTGVTKSSW</sequence>
<dbReference type="EMBL" id="CR522870">
    <property type="protein sequence ID" value="CAG35866.1"/>
    <property type="molecule type" value="Genomic_DNA"/>
</dbReference>
<dbReference type="RefSeq" id="WP_011188380.1">
    <property type="nucleotide sequence ID" value="NC_006138.1"/>
</dbReference>
<dbReference type="SMR" id="Q6AP58"/>
<dbReference type="STRING" id="177439.DP1137"/>
<dbReference type="KEGG" id="dps:DP1137"/>
<dbReference type="eggNOG" id="COG0199">
    <property type="taxonomic scope" value="Bacteria"/>
</dbReference>
<dbReference type="HOGENOM" id="CLU_139869_3_0_7"/>
<dbReference type="OrthoDB" id="9810484at2"/>
<dbReference type="Proteomes" id="UP000000602">
    <property type="component" value="Chromosome"/>
</dbReference>
<dbReference type="GO" id="GO:0005737">
    <property type="term" value="C:cytoplasm"/>
    <property type="evidence" value="ECO:0007669"/>
    <property type="project" value="UniProtKB-ARBA"/>
</dbReference>
<dbReference type="GO" id="GO:0015935">
    <property type="term" value="C:small ribosomal subunit"/>
    <property type="evidence" value="ECO:0007669"/>
    <property type="project" value="TreeGrafter"/>
</dbReference>
<dbReference type="GO" id="GO:0019843">
    <property type="term" value="F:rRNA binding"/>
    <property type="evidence" value="ECO:0007669"/>
    <property type="project" value="UniProtKB-UniRule"/>
</dbReference>
<dbReference type="GO" id="GO:0003735">
    <property type="term" value="F:structural constituent of ribosome"/>
    <property type="evidence" value="ECO:0007669"/>
    <property type="project" value="InterPro"/>
</dbReference>
<dbReference type="GO" id="GO:0008270">
    <property type="term" value="F:zinc ion binding"/>
    <property type="evidence" value="ECO:0007669"/>
    <property type="project" value="UniProtKB-UniRule"/>
</dbReference>
<dbReference type="GO" id="GO:0006412">
    <property type="term" value="P:translation"/>
    <property type="evidence" value="ECO:0007669"/>
    <property type="project" value="UniProtKB-UniRule"/>
</dbReference>
<dbReference type="FunFam" id="4.10.830.10:FF:000001">
    <property type="entry name" value="30S ribosomal protein S14 type Z"/>
    <property type="match status" value="1"/>
</dbReference>
<dbReference type="Gene3D" id="4.10.830.10">
    <property type="entry name" value="30s Ribosomal Protein S14, Chain N"/>
    <property type="match status" value="1"/>
</dbReference>
<dbReference type="HAMAP" id="MF_01364_B">
    <property type="entry name" value="Ribosomal_uS14_2_B"/>
    <property type="match status" value="1"/>
</dbReference>
<dbReference type="InterPro" id="IPR001209">
    <property type="entry name" value="Ribosomal_uS14"/>
</dbReference>
<dbReference type="InterPro" id="IPR023053">
    <property type="entry name" value="Ribosomal_uS14_bact"/>
</dbReference>
<dbReference type="InterPro" id="IPR018271">
    <property type="entry name" value="Ribosomal_uS14_CS"/>
</dbReference>
<dbReference type="InterPro" id="IPR043140">
    <property type="entry name" value="Ribosomal_uS14_sf"/>
</dbReference>
<dbReference type="NCBIfam" id="NF005974">
    <property type="entry name" value="PRK08061.1"/>
    <property type="match status" value="1"/>
</dbReference>
<dbReference type="PANTHER" id="PTHR19836">
    <property type="entry name" value="30S RIBOSOMAL PROTEIN S14"/>
    <property type="match status" value="1"/>
</dbReference>
<dbReference type="PANTHER" id="PTHR19836:SF19">
    <property type="entry name" value="SMALL RIBOSOMAL SUBUNIT PROTEIN US14M"/>
    <property type="match status" value="1"/>
</dbReference>
<dbReference type="Pfam" id="PF00253">
    <property type="entry name" value="Ribosomal_S14"/>
    <property type="match status" value="1"/>
</dbReference>
<dbReference type="SUPFAM" id="SSF57716">
    <property type="entry name" value="Glucocorticoid receptor-like (DNA-binding domain)"/>
    <property type="match status" value="1"/>
</dbReference>
<dbReference type="PROSITE" id="PS00527">
    <property type="entry name" value="RIBOSOMAL_S14"/>
    <property type="match status" value="1"/>
</dbReference>
<reference key="1">
    <citation type="journal article" date="2004" name="Environ. Microbiol.">
        <title>The genome of Desulfotalea psychrophila, a sulfate-reducing bacterium from permanently cold Arctic sediments.</title>
        <authorList>
            <person name="Rabus R."/>
            <person name="Ruepp A."/>
            <person name="Frickey T."/>
            <person name="Rattei T."/>
            <person name="Fartmann B."/>
            <person name="Stark M."/>
            <person name="Bauer M."/>
            <person name="Zibat A."/>
            <person name="Lombardot T."/>
            <person name="Becker I."/>
            <person name="Amann J."/>
            <person name="Gellner K."/>
            <person name="Teeling H."/>
            <person name="Leuschner W.D."/>
            <person name="Gloeckner F.-O."/>
            <person name="Lupas A.N."/>
            <person name="Amann R."/>
            <person name="Klenk H.-P."/>
        </authorList>
    </citation>
    <scope>NUCLEOTIDE SEQUENCE [LARGE SCALE GENOMIC DNA]</scope>
    <source>
        <strain>DSM 12343 / LSv54</strain>
    </source>
</reference>
<accession>Q6AP58</accession>